<keyword id="KW-0131">Cell cycle</keyword>
<keyword id="KW-0132">Cell division</keyword>
<keyword id="KW-1003">Cell membrane</keyword>
<keyword id="KW-0133">Cell shape</keyword>
<keyword id="KW-0961">Cell wall biogenesis/degradation</keyword>
<keyword id="KW-0460">Magnesium</keyword>
<keyword id="KW-0472">Membrane</keyword>
<keyword id="KW-0479">Metal-binding</keyword>
<keyword id="KW-0573">Peptidoglycan synthesis</keyword>
<keyword id="KW-0808">Transferase</keyword>
<keyword id="KW-0812">Transmembrane</keyword>
<keyword id="KW-1133">Transmembrane helix</keyword>
<sequence length="335" mass="36853">MFLTILAGLIAFAVTALAMPHFIRLYQLKKIGGQQMHEDVKQHLAKAGTPTMGGTVFLLVATSLSFVFALVYFRDGQSLGLISGILLIVLIYGIIGFLDDFLKIFKQVNEGLTAKQKFTLQIVGGLVFYVIHVMPSGIDAINVFGYHWHLGFLYLCFVLFWVVGFSNAVNLTDGIDGLASVSVVISLLAYGVIAYAQGQFDVLLLIGIMVGALLAFFLFNHKPAKIFMGDVGSLALGAMLAAISIALRQEWTLLVIGIVYVLETSSVMLQVTYFKYTKKKYGEGRRIFRMTPFHHHLELGGLSGKAAKWSEWKVDAFLWALGLVASLIVLAILYL</sequence>
<protein>
    <recommendedName>
        <fullName evidence="1">Phospho-N-acetylmuramoyl-pentapeptide-transferase</fullName>
        <ecNumber evidence="1">2.7.8.13</ecNumber>
    </recommendedName>
    <alternativeName>
        <fullName evidence="1">UDP-MurNAc-pentapeptide phosphotransferase</fullName>
    </alternativeName>
</protein>
<dbReference type="EC" id="2.7.8.13" evidence="1"/>
<dbReference type="EMBL" id="FM204884">
    <property type="protein sequence ID" value="CAW98251.1"/>
    <property type="molecule type" value="Genomic_DNA"/>
</dbReference>
<dbReference type="SMR" id="C0MGW1"/>
<dbReference type="KEGG" id="seq:SZO_03830"/>
<dbReference type="eggNOG" id="COG0472">
    <property type="taxonomic scope" value="Bacteria"/>
</dbReference>
<dbReference type="HOGENOM" id="CLU_023982_0_1_9"/>
<dbReference type="UniPathway" id="UPA00219"/>
<dbReference type="Proteomes" id="UP000001368">
    <property type="component" value="Chromosome"/>
</dbReference>
<dbReference type="GO" id="GO:0005886">
    <property type="term" value="C:plasma membrane"/>
    <property type="evidence" value="ECO:0007669"/>
    <property type="project" value="UniProtKB-SubCell"/>
</dbReference>
<dbReference type="GO" id="GO:0046872">
    <property type="term" value="F:metal ion binding"/>
    <property type="evidence" value="ECO:0007669"/>
    <property type="project" value="UniProtKB-KW"/>
</dbReference>
<dbReference type="GO" id="GO:0008963">
    <property type="term" value="F:phospho-N-acetylmuramoyl-pentapeptide-transferase activity"/>
    <property type="evidence" value="ECO:0007669"/>
    <property type="project" value="UniProtKB-UniRule"/>
</dbReference>
<dbReference type="GO" id="GO:0051301">
    <property type="term" value="P:cell division"/>
    <property type="evidence" value="ECO:0007669"/>
    <property type="project" value="UniProtKB-KW"/>
</dbReference>
<dbReference type="GO" id="GO:0071555">
    <property type="term" value="P:cell wall organization"/>
    <property type="evidence" value="ECO:0007669"/>
    <property type="project" value="UniProtKB-KW"/>
</dbReference>
<dbReference type="GO" id="GO:0009252">
    <property type="term" value="P:peptidoglycan biosynthetic process"/>
    <property type="evidence" value="ECO:0007669"/>
    <property type="project" value="UniProtKB-UniRule"/>
</dbReference>
<dbReference type="GO" id="GO:0008360">
    <property type="term" value="P:regulation of cell shape"/>
    <property type="evidence" value="ECO:0007669"/>
    <property type="project" value="UniProtKB-KW"/>
</dbReference>
<dbReference type="CDD" id="cd06852">
    <property type="entry name" value="GT_MraY"/>
    <property type="match status" value="1"/>
</dbReference>
<dbReference type="HAMAP" id="MF_00038">
    <property type="entry name" value="MraY"/>
    <property type="match status" value="1"/>
</dbReference>
<dbReference type="InterPro" id="IPR000715">
    <property type="entry name" value="Glycosyl_transferase_4"/>
</dbReference>
<dbReference type="InterPro" id="IPR003524">
    <property type="entry name" value="PNAcMuramoyl-5peptid_Trfase"/>
</dbReference>
<dbReference type="InterPro" id="IPR018480">
    <property type="entry name" value="PNAcMuramoyl-5peptid_Trfase_CS"/>
</dbReference>
<dbReference type="NCBIfam" id="TIGR00445">
    <property type="entry name" value="mraY"/>
    <property type="match status" value="1"/>
</dbReference>
<dbReference type="PANTHER" id="PTHR22926">
    <property type="entry name" value="PHOSPHO-N-ACETYLMURAMOYL-PENTAPEPTIDE-TRANSFERASE"/>
    <property type="match status" value="1"/>
</dbReference>
<dbReference type="PANTHER" id="PTHR22926:SF5">
    <property type="entry name" value="PHOSPHO-N-ACETYLMURAMOYL-PENTAPEPTIDE-TRANSFERASE HOMOLOG"/>
    <property type="match status" value="1"/>
</dbReference>
<dbReference type="Pfam" id="PF00953">
    <property type="entry name" value="Glycos_transf_4"/>
    <property type="match status" value="1"/>
</dbReference>
<dbReference type="Pfam" id="PF10555">
    <property type="entry name" value="MraY_sig1"/>
    <property type="match status" value="1"/>
</dbReference>
<dbReference type="PROSITE" id="PS01348">
    <property type="entry name" value="MRAY_2"/>
    <property type="match status" value="1"/>
</dbReference>
<proteinExistence type="inferred from homology"/>
<accession>C0MGW1</accession>
<organism>
    <name type="scientific">Streptococcus equi subsp. zooepidemicus (strain H70)</name>
    <dbReference type="NCBI Taxonomy" id="553483"/>
    <lineage>
        <taxon>Bacteria</taxon>
        <taxon>Bacillati</taxon>
        <taxon>Bacillota</taxon>
        <taxon>Bacilli</taxon>
        <taxon>Lactobacillales</taxon>
        <taxon>Streptococcaceae</taxon>
        <taxon>Streptococcus</taxon>
    </lineage>
</organism>
<feature type="chain" id="PRO_1000202078" description="Phospho-N-acetylmuramoyl-pentapeptide-transferase">
    <location>
        <begin position="1"/>
        <end position="335"/>
    </location>
</feature>
<feature type="transmembrane region" description="Helical" evidence="1">
    <location>
        <begin position="3"/>
        <end position="23"/>
    </location>
</feature>
<feature type="transmembrane region" description="Helical" evidence="1">
    <location>
        <begin position="53"/>
        <end position="73"/>
    </location>
</feature>
<feature type="transmembrane region" description="Helical" evidence="1">
    <location>
        <begin position="78"/>
        <end position="98"/>
    </location>
</feature>
<feature type="transmembrane region" description="Helical" evidence="1">
    <location>
        <begin position="118"/>
        <end position="138"/>
    </location>
</feature>
<feature type="transmembrane region" description="Helical" evidence="1">
    <location>
        <begin position="143"/>
        <end position="163"/>
    </location>
</feature>
<feature type="transmembrane region" description="Helical" evidence="1">
    <location>
        <begin position="174"/>
        <end position="194"/>
    </location>
</feature>
<feature type="transmembrane region" description="Helical" evidence="1">
    <location>
        <begin position="200"/>
        <end position="220"/>
    </location>
</feature>
<feature type="transmembrane region" description="Helical" evidence="1">
    <location>
        <begin position="226"/>
        <end position="246"/>
    </location>
</feature>
<feature type="transmembrane region" description="Helical" evidence="1">
    <location>
        <begin position="251"/>
        <end position="271"/>
    </location>
</feature>
<feature type="transmembrane region" description="Helical" evidence="1">
    <location>
        <begin position="314"/>
        <end position="334"/>
    </location>
</feature>
<reference key="1">
    <citation type="journal article" date="2009" name="PLoS Pathog.">
        <title>Genomic evidence for the evolution of Streptococcus equi: host restriction, increased virulence, and genetic exchange with human pathogens.</title>
        <authorList>
            <person name="Holden M.T.G."/>
            <person name="Heather Z."/>
            <person name="Paillot R."/>
            <person name="Steward K.F."/>
            <person name="Webb K."/>
            <person name="Ainslie F."/>
            <person name="Jourdan T."/>
            <person name="Bason N.C."/>
            <person name="Holroyd N.E."/>
            <person name="Mungall K."/>
            <person name="Quail M.A."/>
            <person name="Sanders M."/>
            <person name="Simmonds M."/>
            <person name="Willey D."/>
            <person name="Brooks K."/>
            <person name="Aanensen D.M."/>
            <person name="Spratt B.G."/>
            <person name="Jolley K.A."/>
            <person name="Maiden M.C.J."/>
            <person name="Kehoe M."/>
            <person name="Chanter N."/>
            <person name="Bentley S.D."/>
            <person name="Robinson C."/>
            <person name="Maskell D.J."/>
            <person name="Parkhill J."/>
            <person name="Waller A.S."/>
        </authorList>
    </citation>
    <scope>NUCLEOTIDE SEQUENCE [LARGE SCALE GENOMIC DNA]</scope>
    <source>
        <strain>H70</strain>
    </source>
</reference>
<name>MRAY_STRS7</name>
<comment type="function">
    <text evidence="1">Catalyzes the initial step of the lipid cycle reactions in the biosynthesis of the cell wall peptidoglycan: transfers peptidoglycan precursor phospho-MurNAc-pentapeptide from UDP-MurNAc-pentapeptide onto the lipid carrier undecaprenyl phosphate, yielding undecaprenyl-pyrophosphoryl-MurNAc-pentapeptide, known as lipid I.</text>
</comment>
<comment type="catalytic activity">
    <reaction evidence="1">
        <text>UDP-N-acetyl-alpha-D-muramoyl-L-alanyl-gamma-D-glutamyl-L-lysyl-D-alanyl-D-alanine + di-trans,octa-cis-undecaprenyl phosphate = Mur2Ac(oyl-L-Ala-gamma-D-Glu-L-Lys-D-Ala-D-Ala)-di-trans,octa-cis-undecaprenyl diphosphate + UMP</text>
        <dbReference type="Rhea" id="RHEA:21920"/>
        <dbReference type="ChEBI" id="CHEBI:57865"/>
        <dbReference type="ChEBI" id="CHEBI:60032"/>
        <dbReference type="ChEBI" id="CHEBI:60392"/>
        <dbReference type="ChEBI" id="CHEBI:70758"/>
        <dbReference type="EC" id="2.7.8.13"/>
    </reaction>
</comment>
<comment type="cofactor">
    <cofactor evidence="1">
        <name>Mg(2+)</name>
        <dbReference type="ChEBI" id="CHEBI:18420"/>
    </cofactor>
</comment>
<comment type="pathway">
    <text evidence="1">Cell wall biogenesis; peptidoglycan biosynthesis.</text>
</comment>
<comment type="subcellular location">
    <subcellularLocation>
        <location evidence="1">Cell membrane</location>
        <topology evidence="1">Multi-pass membrane protein</topology>
    </subcellularLocation>
</comment>
<comment type="similarity">
    <text evidence="1">Belongs to the glycosyltransferase 4 family. MraY subfamily.</text>
</comment>
<gene>
    <name evidence="1" type="primary">mraY</name>
    <name type="ordered locus">SZO_03830</name>
</gene>
<evidence type="ECO:0000255" key="1">
    <source>
        <dbReference type="HAMAP-Rule" id="MF_00038"/>
    </source>
</evidence>